<protein>
    <recommendedName>
        <fullName evidence="1">FMN-dependent NADH:quinone oxidoreductase 3</fullName>
        <ecNumber evidence="1">1.6.5.-</ecNumber>
    </recommendedName>
    <alternativeName>
        <fullName evidence="1">Azo-dye reductase 3</fullName>
    </alternativeName>
    <alternativeName>
        <fullName evidence="1">FMN-dependent NADH-azo compound oxidoreductase 3</fullName>
    </alternativeName>
    <alternativeName>
        <fullName evidence="1">FMN-dependent NADH-azoreductase 3</fullName>
        <ecNumber evidence="1">1.7.1.17</ecNumber>
    </alternativeName>
</protein>
<accession>Q394J5</accession>
<gene>
    <name evidence="1" type="primary">azoR3</name>
    <name type="ordered locus">Bcep18194_B2008</name>
</gene>
<organism>
    <name type="scientific">Burkholderia lata (strain ATCC 17760 / DSM 23089 / LMG 22485 / NCIMB 9086 / R18194 / 383)</name>
    <dbReference type="NCBI Taxonomy" id="482957"/>
    <lineage>
        <taxon>Bacteria</taxon>
        <taxon>Pseudomonadati</taxon>
        <taxon>Pseudomonadota</taxon>
        <taxon>Betaproteobacteria</taxon>
        <taxon>Burkholderiales</taxon>
        <taxon>Burkholderiaceae</taxon>
        <taxon>Burkholderia</taxon>
        <taxon>Burkholderia cepacia complex</taxon>
    </lineage>
</organism>
<keyword id="KW-0285">Flavoprotein</keyword>
<keyword id="KW-0288">FMN</keyword>
<keyword id="KW-0520">NAD</keyword>
<keyword id="KW-0560">Oxidoreductase</keyword>
<name>AZOR3_BURL3</name>
<sequence length="207" mass="23171">MFKLLQIDSSPMGDASISRRLTQEYARNWLRAHPDGRVVERDLCRIAMPPIDAAWIAANFTPPDRRTAQQNEMLALSTTFTTELRDADEYVIGVPMHNWGPSAHFKLWLDHIVRQGETVETTPSGPRGLLGGRRATFVIAAGWRYGPDAERAQRNFLEPWLRTLFGFLGVEDMRFVMADGAADVFTGKADSAVFLAPHVDAVRALFA</sequence>
<dbReference type="EC" id="1.6.5.-" evidence="1"/>
<dbReference type="EC" id="1.7.1.17" evidence="1"/>
<dbReference type="EMBL" id="CP000152">
    <property type="protein sequence ID" value="ABB12121.1"/>
    <property type="molecule type" value="Genomic_DNA"/>
</dbReference>
<dbReference type="RefSeq" id="WP_011355605.1">
    <property type="nucleotide sequence ID" value="NC_007511.1"/>
</dbReference>
<dbReference type="SMR" id="Q394J5"/>
<dbReference type="GeneID" id="45098337"/>
<dbReference type="KEGG" id="bur:Bcep18194_B2008"/>
<dbReference type="PATRIC" id="fig|482957.22.peg.5752"/>
<dbReference type="HOGENOM" id="CLU_088964_0_0_4"/>
<dbReference type="Proteomes" id="UP000002705">
    <property type="component" value="Chromosome 2"/>
</dbReference>
<dbReference type="GO" id="GO:0009055">
    <property type="term" value="F:electron transfer activity"/>
    <property type="evidence" value="ECO:0007669"/>
    <property type="project" value="UniProtKB-UniRule"/>
</dbReference>
<dbReference type="GO" id="GO:0010181">
    <property type="term" value="F:FMN binding"/>
    <property type="evidence" value="ECO:0007669"/>
    <property type="project" value="UniProtKB-UniRule"/>
</dbReference>
<dbReference type="GO" id="GO:0016652">
    <property type="term" value="F:oxidoreductase activity, acting on NAD(P)H as acceptor"/>
    <property type="evidence" value="ECO:0007669"/>
    <property type="project" value="UniProtKB-UniRule"/>
</dbReference>
<dbReference type="GO" id="GO:0016655">
    <property type="term" value="F:oxidoreductase activity, acting on NAD(P)H, quinone or similar compound as acceptor"/>
    <property type="evidence" value="ECO:0007669"/>
    <property type="project" value="InterPro"/>
</dbReference>
<dbReference type="Gene3D" id="3.40.50.360">
    <property type="match status" value="1"/>
</dbReference>
<dbReference type="HAMAP" id="MF_01216">
    <property type="entry name" value="Azoreductase_type1"/>
    <property type="match status" value="1"/>
</dbReference>
<dbReference type="InterPro" id="IPR003680">
    <property type="entry name" value="Flavodoxin_fold"/>
</dbReference>
<dbReference type="InterPro" id="IPR029039">
    <property type="entry name" value="Flavoprotein-like_sf"/>
</dbReference>
<dbReference type="InterPro" id="IPR050104">
    <property type="entry name" value="FMN-dep_NADH:Q_OxRdtase_AzoR1"/>
</dbReference>
<dbReference type="InterPro" id="IPR023048">
    <property type="entry name" value="NADH:quinone_OxRdtase_FMN_depd"/>
</dbReference>
<dbReference type="PANTHER" id="PTHR43741">
    <property type="entry name" value="FMN-DEPENDENT NADH-AZOREDUCTASE 1"/>
    <property type="match status" value="1"/>
</dbReference>
<dbReference type="PANTHER" id="PTHR43741:SF2">
    <property type="entry name" value="FMN-DEPENDENT NADH:QUINONE OXIDOREDUCTASE"/>
    <property type="match status" value="1"/>
</dbReference>
<dbReference type="Pfam" id="PF02525">
    <property type="entry name" value="Flavodoxin_2"/>
    <property type="match status" value="1"/>
</dbReference>
<dbReference type="SUPFAM" id="SSF52218">
    <property type="entry name" value="Flavoproteins"/>
    <property type="match status" value="1"/>
</dbReference>
<reference key="1">
    <citation type="submission" date="2005-10" db="EMBL/GenBank/DDBJ databases">
        <title>Complete sequence of chromosome 2 of Burkholderia sp. 383.</title>
        <authorList>
            <consortium name="US DOE Joint Genome Institute"/>
            <person name="Copeland A."/>
            <person name="Lucas S."/>
            <person name="Lapidus A."/>
            <person name="Barry K."/>
            <person name="Detter J.C."/>
            <person name="Glavina T."/>
            <person name="Hammon N."/>
            <person name="Israni S."/>
            <person name="Pitluck S."/>
            <person name="Chain P."/>
            <person name="Malfatti S."/>
            <person name="Shin M."/>
            <person name="Vergez L."/>
            <person name="Schmutz J."/>
            <person name="Larimer F."/>
            <person name="Land M."/>
            <person name="Kyrpides N."/>
            <person name="Lykidis A."/>
            <person name="Richardson P."/>
        </authorList>
    </citation>
    <scope>NUCLEOTIDE SEQUENCE [LARGE SCALE GENOMIC DNA]</scope>
    <source>
        <strain>ATCC 17760 / DSM 23089 / LMG 22485 / NCIMB 9086 / R18194 / 383</strain>
    </source>
</reference>
<comment type="function">
    <text evidence="1">Quinone reductase that provides resistance to thiol-specific stress caused by electrophilic quinones.</text>
</comment>
<comment type="function">
    <text evidence="1">Also exhibits azoreductase activity. Catalyzes the reductive cleavage of the azo bond in aromatic azo compounds to the corresponding amines.</text>
</comment>
<comment type="catalytic activity">
    <reaction evidence="1">
        <text>2 a quinone + NADH + H(+) = 2 a 1,4-benzosemiquinone + NAD(+)</text>
        <dbReference type="Rhea" id="RHEA:65952"/>
        <dbReference type="ChEBI" id="CHEBI:15378"/>
        <dbReference type="ChEBI" id="CHEBI:57540"/>
        <dbReference type="ChEBI" id="CHEBI:57945"/>
        <dbReference type="ChEBI" id="CHEBI:132124"/>
        <dbReference type="ChEBI" id="CHEBI:134225"/>
    </reaction>
</comment>
<comment type="catalytic activity">
    <reaction evidence="1">
        <text>N,N-dimethyl-1,4-phenylenediamine + anthranilate + 2 NAD(+) = 2-(4-dimethylaminophenyl)diazenylbenzoate + 2 NADH + 2 H(+)</text>
        <dbReference type="Rhea" id="RHEA:55872"/>
        <dbReference type="ChEBI" id="CHEBI:15378"/>
        <dbReference type="ChEBI" id="CHEBI:15783"/>
        <dbReference type="ChEBI" id="CHEBI:16567"/>
        <dbReference type="ChEBI" id="CHEBI:57540"/>
        <dbReference type="ChEBI" id="CHEBI:57945"/>
        <dbReference type="ChEBI" id="CHEBI:71579"/>
        <dbReference type="EC" id="1.7.1.17"/>
    </reaction>
</comment>
<comment type="cofactor">
    <cofactor evidence="1">
        <name>FMN</name>
        <dbReference type="ChEBI" id="CHEBI:58210"/>
    </cofactor>
    <text evidence="1">Binds 1 FMN per subunit.</text>
</comment>
<comment type="subunit">
    <text evidence="1">Homodimer.</text>
</comment>
<comment type="similarity">
    <text evidence="1">Belongs to the azoreductase type 1 family.</text>
</comment>
<proteinExistence type="inferred from homology"/>
<evidence type="ECO:0000255" key="1">
    <source>
        <dbReference type="HAMAP-Rule" id="MF_01216"/>
    </source>
</evidence>
<feature type="chain" id="PRO_0000245903" description="FMN-dependent NADH:quinone oxidoreductase 3">
    <location>
        <begin position="1"/>
        <end position="207"/>
    </location>
</feature>
<feature type="binding site" evidence="1">
    <location>
        <position position="10"/>
    </location>
    <ligand>
        <name>FMN</name>
        <dbReference type="ChEBI" id="CHEBI:58210"/>
    </ligand>
</feature>
<feature type="binding site" evidence="1">
    <location>
        <begin position="16"/>
        <end position="18"/>
    </location>
    <ligand>
        <name>FMN</name>
        <dbReference type="ChEBI" id="CHEBI:58210"/>
    </ligand>
</feature>